<protein>
    <recommendedName>
        <fullName>Aspartokinase</fullName>
        <ecNumber>2.7.2.4</ecNumber>
    </recommendedName>
    <alternativeName>
        <fullName>Aspartate kinase</fullName>
        <shortName>ASK</shortName>
    </alternativeName>
</protein>
<dbReference type="EC" id="2.7.2.4"/>
<dbReference type="EMBL" id="AB013131">
    <property type="protein sequence ID" value="BAA25848.1"/>
    <property type="molecule type" value="Genomic_DNA"/>
</dbReference>
<dbReference type="EMBL" id="AB013131">
    <property type="protein sequence ID" value="BAA25849.1"/>
    <property type="molecule type" value="Genomic_DNA"/>
</dbReference>
<dbReference type="EMBL" id="AE017221">
    <property type="protein sequence ID" value="AAS80514.1"/>
    <property type="status" value="ALT_INIT"/>
    <property type="molecule type" value="Genomic_DNA"/>
</dbReference>
<dbReference type="RefSeq" id="WP_011228007.1">
    <molecule id="P61488-1"/>
    <property type="nucleotide sequence ID" value="NC_005835.1"/>
</dbReference>
<dbReference type="SMR" id="P61488"/>
<dbReference type="GeneID" id="3168597"/>
<dbReference type="KEGG" id="tth:TT_C0166"/>
<dbReference type="eggNOG" id="COG0527">
    <property type="taxonomic scope" value="Bacteria"/>
</dbReference>
<dbReference type="HOGENOM" id="CLU_009116_3_2_0"/>
<dbReference type="OrthoDB" id="9799110at2"/>
<dbReference type="UniPathway" id="UPA00034">
    <property type="reaction ID" value="UER00015"/>
</dbReference>
<dbReference type="UniPathway" id="UPA00050">
    <property type="reaction ID" value="UER00461"/>
</dbReference>
<dbReference type="UniPathway" id="UPA00051">
    <property type="reaction ID" value="UER00462"/>
</dbReference>
<dbReference type="Proteomes" id="UP000000592">
    <property type="component" value="Chromosome"/>
</dbReference>
<dbReference type="GO" id="GO:0005829">
    <property type="term" value="C:cytosol"/>
    <property type="evidence" value="ECO:0007669"/>
    <property type="project" value="TreeGrafter"/>
</dbReference>
<dbReference type="GO" id="GO:0004072">
    <property type="term" value="F:aspartate kinase activity"/>
    <property type="evidence" value="ECO:0007669"/>
    <property type="project" value="UniProtKB-EC"/>
</dbReference>
<dbReference type="GO" id="GO:0005524">
    <property type="term" value="F:ATP binding"/>
    <property type="evidence" value="ECO:0007669"/>
    <property type="project" value="UniProtKB-KW"/>
</dbReference>
<dbReference type="GO" id="GO:0019877">
    <property type="term" value="P:diaminopimelate biosynthetic process"/>
    <property type="evidence" value="ECO:0007669"/>
    <property type="project" value="UniProtKB-KW"/>
</dbReference>
<dbReference type="GO" id="GO:0009090">
    <property type="term" value="P:homoserine biosynthetic process"/>
    <property type="evidence" value="ECO:0007669"/>
    <property type="project" value="TreeGrafter"/>
</dbReference>
<dbReference type="GO" id="GO:0009089">
    <property type="term" value="P:lysine biosynthetic process via diaminopimelate"/>
    <property type="evidence" value="ECO:0007669"/>
    <property type="project" value="UniProtKB-UniPathway"/>
</dbReference>
<dbReference type="GO" id="GO:0009088">
    <property type="term" value="P:threonine biosynthetic process"/>
    <property type="evidence" value="ECO:0007669"/>
    <property type="project" value="UniProtKB-UniPathway"/>
</dbReference>
<dbReference type="CDD" id="cd04261">
    <property type="entry name" value="AAK_AKii-LysC-BS"/>
    <property type="match status" value="1"/>
</dbReference>
<dbReference type="CDD" id="cd04923">
    <property type="entry name" value="ACT_AK-LysC-DapG-like_2"/>
    <property type="match status" value="1"/>
</dbReference>
<dbReference type="CDD" id="cd04913">
    <property type="entry name" value="ACT_AKii-LysC-BS-like_1"/>
    <property type="match status" value="1"/>
</dbReference>
<dbReference type="FunFam" id="3.40.1160.10:FF:000002">
    <property type="entry name" value="Aspartokinase"/>
    <property type="match status" value="1"/>
</dbReference>
<dbReference type="FunFam" id="3.30.2130.10:FF:000001">
    <property type="entry name" value="Bifunctional aspartokinase/homoserine dehydrogenase"/>
    <property type="match status" value="1"/>
</dbReference>
<dbReference type="Gene3D" id="3.30.70.260">
    <property type="match status" value="2"/>
</dbReference>
<dbReference type="Gene3D" id="3.40.1160.10">
    <property type="entry name" value="Acetylglutamate kinase-like"/>
    <property type="match status" value="1"/>
</dbReference>
<dbReference type="InterPro" id="IPR036393">
    <property type="entry name" value="AceGlu_kinase-like_sf"/>
</dbReference>
<dbReference type="InterPro" id="IPR045865">
    <property type="entry name" value="ACT-like_dom_sf"/>
</dbReference>
<dbReference type="InterPro" id="IPR054352">
    <property type="entry name" value="ACT_Aspartokinase"/>
</dbReference>
<dbReference type="InterPro" id="IPR002912">
    <property type="entry name" value="ACT_dom"/>
</dbReference>
<dbReference type="InterPro" id="IPR041740">
    <property type="entry name" value="AKii-LysC-BS"/>
</dbReference>
<dbReference type="InterPro" id="IPR001048">
    <property type="entry name" value="Asp/Glu/Uridylate_kinase"/>
</dbReference>
<dbReference type="InterPro" id="IPR005260">
    <property type="entry name" value="Asp_kin_monofn"/>
</dbReference>
<dbReference type="InterPro" id="IPR001341">
    <property type="entry name" value="Asp_kinase"/>
</dbReference>
<dbReference type="InterPro" id="IPR018042">
    <property type="entry name" value="Aspartate_kinase_CS"/>
</dbReference>
<dbReference type="NCBIfam" id="TIGR00656">
    <property type="entry name" value="asp_kin_monofn"/>
    <property type="match status" value="1"/>
</dbReference>
<dbReference type="NCBIfam" id="TIGR00657">
    <property type="entry name" value="asp_kinases"/>
    <property type="match status" value="1"/>
</dbReference>
<dbReference type="NCBIfam" id="NF005154">
    <property type="entry name" value="PRK06635.1-2"/>
    <property type="match status" value="1"/>
</dbReference>
<dbReference type="NCBIfam" id="NF005155">
    <property type="entry name" value="PRK06635.1-4"/>
    <property type="match status" value="1"/>
</dbReference>
<dbReference type="PANTHER" id="PTHR21499">
    <property type="entry name" value="ASPARTATE KINASE"/>
    <property type="match status" value="1"/>
</dbReference>
<dbReference type="PANTHER" id="PTHR21499:SF3">
    <property type="entry name" value="ASPARTOKINASE"/>
    <property type="match status" value="1"/>
</dbReference>
<dbReference type="Pfam" id="PF00696">
    <property type="entry name" value="AA_kinase"/>
    <property type="match status" value="1"/>
</dbReference>
<dbReference type="Pfam" id="PF22468">
    <property type="entry name" value="ACT_9"/>
    <property type="match status" value="2"/>
</dbReference>
<dbReference type="PIRSF" id="PIRSF000726">
    <property type="entry name" value="Asp_kin"/>
    <property type="match status" value="1"/>
</dbReference>
<dbReference type="SUPFAM" id="SSF55021">
    <property type="entry name" value="ACT-like"/>
    <property type="match status" value="2"/>
</dbReference>
<dbReference type="SUPFAM" id="SSF53633">
    <property type="entry name" value="Carbamate kinase-like"/>
    <property type="match status" value="1"/>
</dbReference>
<dbReference type="PROSITE" id="PS51671">
    <property type="entry name" value="ACT"/>
    <property type="match status" value="1"/>
</dbReference>
<dbReference type="PROSITE" id="PS00324">
    <property type="entry name" value="ASPARTOKINASE"/>
    <property type="match status" value="1"/>
</dbReference>
<reference key="1">
    <citation type="journal article" date="1999" name="J. Bacteriol.">
        <title>Aspartate kinase-independent lysine synthesis in an extremely thermophilic bacterium, Thermus thermophilus: lysine is synthesized via alpha-aminoadipic acid not via diaminopimelic acid.</title>
        <authorList>
            <person name="Kobashi N."/>
            <person name="Nishiyama M."/>
            <person name="Tanokura M."/>
        </authorList>
    </citation>
    <scope>NUCLEOTIDE SEQUENCE [GENOMIC DNA]</scope>
    <scope>FUNCTION</scope>
    <scope>DISRUPTION PHENOTYPE</scope>
</reference>
<reference key="2">
    <citation type="journal article" date="2004" name="Nat. Biotechnol.">
        <title>The genome sequence of the extreme thermophile Thermus thermophilus.</title>
        <authorList>
            <person name="Henne A."/>
            <person name="Brueggemann H."/>
            <person name="Raasch C."/>
            <person name="Wiezer A."/>
            <person name="Hartsch T."/>
            <person name="Liesegang H."/>
            <person name="Johann A."/>
            <person name="Lienard T."/>
            <person name="Gohl O."/>
            <person name="Martinez-Arias R."/>
            <person name="Jacobi C."/>
            <person name="Starkuviene V."/>
            <person name="Schlenczeck S."/>
            <person name="Dencker S."/>
            <person name="Huber R."/>
            <person name="Klenk H.-P."/>
            <person name="Kramer W."/>
            <person name="Merkl R."/>
            <person name="Gottschalk G."/>
            <person name="Fritz H.-J."/>
        </authorList>
    </citation>
    <scope>NUCLEOTIDE SEQUENCE [LARGE SCALE GENOMIC DNA]</scope>
    <source>
        <strain>ATCC BAA-163 / DSM 7039 / HB27</strain>
    </source>
</reference>
<accession>P61488</accession>
<accession>P77991</accession>
<accession>P97151</accession>
<organism>
    <name type="scientific">Thermus thermophilus (strain ATCC BAA-163 / DSM 7039 / HB27)</name>
    <dbReference type="NCBI Taxonomy" id="262724"/>
    <lineage>
        <taxon>Bacteria</taxon>
        <taxon>Thermotogati</taxon>
        <taxon>Deinococcota</taxon>
        <taxon>Deinococci</taxon>
        <taxon>Thermales</taxon>
        <taxon>Thermaceae</taxon>
        <taxon>Thermus</taxon>
    </lineage>
</organism>
<gene>
    <name type="primary">ask</name>
    <name type="synonym">askAB</name>
    <name type="ordered locus">TT_C0166</name>
</gene>
<evidence type="ECO:0000250" key="1"/>
<evidence type="ECO:0000255" key="2">
    <source>
        <dbReference type="PROSITE-ProRule" id="PRU01007"/>
    </source>
</evidence>
<evidence type="ECO:0000269" key="3">
    <source>
    </source>
</evidence>
<evidence type="ECO:0000305" key="4"/>
<comment type="function">
    <text evidence="3">Catalyzes the phosphorylation of the beta-carboxyl group of aspartic acid with ATP to yield 4-phospho-L-aspartate, which is involved in the branched biosynthetic pathway leading to the biosynthesis of amino acids lysine, threonine, isoleucine and methionine.</text>
</comment>
<comment type="catalytic activity">
    <reaction>
        <text>L-aspartate + ATP = 4-phospho-L-aspartate + ADP</text>
        <dbReference type="Rhea" id="RHEA:23776"/>
        <dbReference type="ChEBI" id="CHEBI:29991"/>
        <dbReference type="ChEBI" id="CHEBI:30616"/>
        <dbReference type="ChEBI" id="CHEBI:57535"/>
        <dbReference type="ChEBI" id="CHEBI:456216"/>
        <dbReference type="EC" id="2.7.2.4"/>
    </reaction>
</comment>
<comment type="pathway">
    <text>Amino-acid biosynthesis; L-lysine biosynthesis via DAP pathway; (S)-tetrahydrodipicolinate from L-aspartate: step 1/4.</text>
</comment>
<comment type="pathway">
    <text>Amino-acid biosynthesis; L-methionine biosynthesis via de novo pathway; L-homoserine from L-aspartate: step 1/3.</text>
</comment>
<comment type="pathway">
    <text>Amino-acid biosynthesis; L-threonine biosynthesis; L-threonine from L-aspartate: step 1/5.</text>
</comment>
<comment type="subunit">
    <text evidence="1">Tetramer consisting of 2 isoforms Alpha (catalytic and regulation) and of a homodimer of 2 isoforms Beta (regulation).</text>
</comment>
<comment type="alternative products">
    <event type="alternative initiation"/>
    <isoform>
        <id>P61488-1</id>
        <name>Alpha</name>
        <name>Aspartokinase subunit alpha</name>
        <sequence type="displayed"/>
    </isoform>
    <isoform>
        <id>P61488-2</id>
        <name>Beta</name>
        <name>Aspartokinase subunit beta</name>
        <sequence type="described" ref="VSP_018664"/>
    </isoform>
</comment>
<comment type="disruption phenotype">
    <text evidence="3">Cells lacking this gene show auxotrophy for methionine and threonine.</text>
</comment>
<comment type="similarity">
    <text evidence="4">Belongs to the aspartokinase family.</text>
</comment>
<comment type="sequence caution" evidence="4">
    <conflict type="erroneous initiation">
        <sequence resource="EMBL-CDS" id="AAS80514"/>
    </conflict>
    <text>Extended N-terminus.</text>
</comment>
<name>AK_THET2</name>
<proteinExistence type="inferred from homology"/>
<feature type="chain" id="PRO_0000002387" description="Aspartokinase">
    <location>
        <begin position="1"/>
        <end position="405"/>
    </location>
</feature>
<feature type="domain" description="ACT 1" evidence="2">
    <location>
        <begin position="263"/>
        <end position="342"/>
    </location>
</feature>
<feature type="domain" description="ACT 2" evidence="2">
    <location>
        <begin position="344"/>
        <end position="405"/>
    </location>
</feature>
<feature type="binding site" evidence="1">
    <location>
        <begin position="7"/>
        <end position="10"/>
    </location>
    <ligand>
        <name>ATP</name>
        <dbReference type="ChEBI" id="CHEBI:30616"/>
    </ligand>
</feature>
<feature type="binding site" evidence="1">
    <location>
        <begin position="25"/>
        <end position="30"/>
    </location>
    <ligand>
        <name>substrate</name>
    </ligand>
</feature>
<feature type="binding site" evidence="1">
    <location>
        <position position="41"/>
    </location>
    <ligand>
        <name>ATP</name>
        <dbReference type="ChEBI" id="CHEBI:30616"/>
    </ligand>
</feature>
<feature type="binding site" evidence="1">
    <location>
        <begin position="47"/>
        <end position="49"/>
    </location>
    <ligand>
        <name>substrate</name>
    </ligand>
</feature>
<feature type="binding site" evidence="1">
    <location>
        <position position="74"/>
    </location>
    <ligand>
        <name>substrate</name>
    </ligand>
</feature>
<feature type="binding site" evidence="1">
    <location>
        <begin position="125"/>
        <end position="126"/>
    </location>
    <ligand>
        <name>substrate</name>
    </ligand>
</feature>
<feature type="binding site" evidence="1">
    <location>
        <begin position="150"/>
        <end position="153"/>
    </location>
    <ligand>
        <name>substrate</name>
    </ligand>
</feature>
<feature type="binding site" evidence="1">
    <location>
        <position position="153"/>
    </location>
    <ligand>
        <name>substrate</name>
    </ligand>
</feature>
<feature type="binding site" evidence="1">
    <location>
        <begin position="173"/>
        <end position="174"/>
    </location>
    <ligand>
        <name>ATP</name>
        <dbReference type="ChEBI" id="CHEBI:30616"/>
    </ligand>
</feature>
<feature type="binding site" evidence="1">
    <location>
        <begin position="179"/>
        <end position="184"/>
    </location>
    <ligand>
        <name>ATP</name>
        <dbReference type="ChEBI" id="CHEBI:30616"/>
    </ligand>
</feature>
<feature type="binding site" evidence="1">
    <location>
        <position position="209"/>
    </location>
    <ligand>
        <name>ATP</name>
        <dbReference type="ChEBI" id="CHEBI:30616"/>
    </ligand>
</feature>
<feature type="binding site" evidence="1">
    <location>
        <position position="270"/>
    </location>
    <ligand>
        <name>substrate</name>
    </ligand>
</feature>
<feature type="binding site" evidence="1">
    <location>
        <begin position="288"/>
        <end position="290"/>
    </location>
    <ligand>
        <name>substrate</name>
    </ligand>
</feature>
<feature type="binding site" evidence="1">
    <location>
        <position position="294"/>
    </location>
    <ligand>
        <name>substrate</name>
    </ligand>
</feature>
<feature type="binding site" evidence="1">
    <location>
        <begin position="355"/>
        <end position="356"/>
    </location>
    <ligand>
        <name>substrate</name>
    </ligand>
</feature>
<feature type="binding site" evidence="1">
    <location>
        <begin position="369"/>
        <end position="370"/>
    </location>
    <ligand>
        <name>substrate</name>
    </ligand>
</feature>
<feature type="binding site" evidence="1">
    <location>
        <begin position="376"/>
        <end position="377"/>
    </location>
    <ligand>
        <name>substrate</name>
    </ligand>
</feature>
<feature type="site" description="Contribution to the catalysis" evidence="1">
    <location>
        <position position="7"/>
    </location>
</feature>
<feature type="site" description="Contribution to the catalysis" evidence="1">
    <location>
        <position position="74"/>
    </location>
</feature>
<feature type="splice variant" id="VSP_018664" description="In isoform Beta." evidence="4">
    <location>
        <begin position="1"/>
        <end position="244"/>
    </location>
</feature>
<keyword id="KW-0024">Alternative initiation</keyword>
<keyword id="KW-0028">Amino-acid biosynthesis</keyword>
<keyword id="KW-0067">ATP-binding</keyword>
<keyword id="KW-0220">Diaminopimelate biosynthesis</keyword>
<keyword id="KW-0418">Kinase</keyword>
<keyword id="KW-0457">Lysine biosynthesis</keyword>
<keyword id="KW-0547">Nucleotide-binding</keyword>
<keyword id="KW-0677">Repeat</keyword>
<keyword id="KW-0808">Transferase</keyword>
<sequence>MALVVQKYGGTSVGDLERIHKVAQRIAHYREKGHRLAVVVSAMGHTTDELIALAKRVNPRPPFRELDLLTTTGEQVSVALLSMQLWAMGIPAKGFVQHQIGITTDGRYGDARILEVNPARIREALEQGFVAVIAGFMGTTPEGEITTLGRGGSDTTAVAIAAALGAKECEIYTDTEGVYTTDPHLIPEARKLSVIGYDQMLEMAALGARVLHPRAVYYAKRYGVVLHVRSSFSYNPGTLVKEVAMEMDKAVTGVALDLDHAQIGLIGIPDQPGIAAKVFQALAERGIAVDMIIQGVPGHDPSRQQMAFTVKKDFAQEALEALEPVLAEIGGEAILRPDIAKVSIVGVGLASTPEVPAKMFQAVASTGANIEMIATSEVRISVIIPAEYAEAALRAVHQAFELDKA</sequence>